<sequence>MIEKIWSGESPLWRLLLPLSWLYGLVSGAIRLCYKLKLKRAWRAPVPVVVVGNLTAGGNGKTPVVVWLVEQLQQRGIRVGVVSRGYGGKAESYPLLLSADTTTAQAGDEPVLIYQRTGAPVAVSPVRSDAVKAILAQHPDVQIIVTDDGLQHYRLARDVEIVVIDGVRRFGNGWWLPAGPMRERAGRLKSVDAVIVNGGVPRSGEIPMHLLPGQAVNLRTGTRCDVAQLEHVVAIAGIGHPPRFFATLKMCGVQPEKCVPLADHQSLNHADVSALVSAGQTLVMTEKDAVKCRAFAEENWWYLPVDAQLSGDEPAKLLAQLTSLASGH</sequence>
<evidence type="ECO:0000255" key="1">
    <source>
        <dbReference type="HAMAP-Rule" id="MF_00409"/>
    </source>
</evidence>
<name>LPXK_ECOUT</name>
<dbReference type="EC" id="2.7.1.130" evidence="1"/>
<dbReference type="EMBL" id="CP000243">
    <property type="protein sequence ID" value="ABE06471.1"/>
    <property type="molecule type" value="Genomic_DNA"/>
</dbReference>
<dbReference type="RefSeq" id="WP_000570549.1">
    <property type="nucleotide sequence ID" value="NZ_CP064825.1"/>
</dbReference>
<dbReference type="SMR" id="Q1RDU3"/>
<dbReference type="KEGG" id="eci:UTI89_C0986"/>
<dbReference type="HOGENOM" id="CLU_038816_2_0_6"/>
<dbReference type="UniPathway" id="UPA00359">
    <property type="reaction ID" value="UER00482"/>
</dbReference>
<dbReference type="Proteomes" id="UP000001952">
    <property type="component" value="Chromosome"/>
</dbReference>
<dbReference type="GO" id="GO:0005886">
    <property type="term" value="C:plasma membrane"/>
    <property type="evidence" value="ECO:0007669"/>
    <property type="project" value="TreeGrafter"/>
</dbReference>
<dbReference type="GO" id="GO:0005524">
    <property type="term" value="F:ATP binding"/>
    <property type="evidence" value="ECO:0007669"/>
    <property type="project" value="UniProtKB-UniRule"/>
</dbReference>
<dbReference type="GO" id="GO:0009029">
    <property type="term" value="F:tetraacyldisaccharide 4'-kinase activity"/>
    <property type="evidence" value="ECO:0007669"/>
    <property type="project" value="UniProtKB-UniRule"/>
</dbReference>
<dbReference type="GO" id="GO:0009245">
    <property type="term" value="P:lipid A biosynthetic process"/>
    <property type="evidence" value="ECO:0007669"/>
    <property type="project" value="UniProtKB-UniRule"/>
</dbReference>
<dbReference type="GO" id="GO:0009244">
    <property type="term" value="P:lipopolysaccharide core region biosynthetic process"/>
    <property type="evidence" value="ECO:0007669"/>
    <property type="project" value="TreeGrafter"/>
</dbReference>
<dbReference type="HAMAP" id="MF_00409">
    <property type="entry name" value="LpxK"/>
    <property type="match status" value="1"/>
</dbReference>
<dbReference type="InterPro" id="IPR003758">
    <property type="entry name" value="LpxK"/>
</dbReference>
<dbReference type="InterPro" id="IPR027417">
    <property type="entry name" value="P-loop_NTPase"/>
</dbReference>
<dbReference type="NCBIfam" id="TIGR00682">
    <property type="entry name" value="lpxK"/>
    <property type="match status" value="1"/>
</dbReference>
<dbReference type="PANTHER" id="PTHR42724">
    <property type="entry name" value="TETRAACYLDISACCHARIDE 4'-KINASE"/>
    <property type="match status" value="1"/>
</dbReference>
<dbReference type="PANTHER" id="PTHR42724:SF1">
    <property type="entry name" value="TETRAACYLDISACCHARIDE 4'-KINASE, MITOCHONDRIAL-RELATED"/>
    <property type="match status" value="1"/>
</dbReference>
<dbReference type="Pfam" id="PF02606">
    <property type="entry name" value="LpxK"/>
    <property type="match status" value="1"/>
</dbReference>
<dbReference type="SUPFAM" id="SSF52540">
    <property type="entry name" value="P-loop containing nucleoside triphosphate hydrolases"/>
    <property type="match status" value="1"/>
</dbReference>
<reference key="1">
    <citation type="journal article" date="2006" name="Proc. Natl. Acad. Sci. U.S.A.">
        <title>Identification of genes subject to positive selection in uropathogenic strains of Escherichia coli: a comparative genomics approach.</title>
        <authorList>
            <person name="Chen S.L."/>
            <person name="Hung C.-S."/>
            <person name="Xu J."/>
            <person name="Reigstad C.S."/>
            <person name="Magrini V."/>
            <person name="Sabo A."/>
            <person name="Blasiar D."/>
            <person name="Bieri T."/>
            <person name="Meyer R.R."/>
            <person name="Ozersky P."/>
            <person name="Armstrong J.R."/>
            <person name="Fulton R.S."/>
            <person name="Latreille J.P."/>
            <person name="Spieth J."/>
            <person name="Hooton T.M."/>
            <person name="Mardis E.R."/>
            <person name="Hultgren S.J."/>
            <person name="Gordon J.I."/>
        </authorList>
    </citation>
    <scope>NUCLEOTIDE SEQUENCE [LARGE SCALE GENOMIC DNA]</scope>
    <source>
        <strain>UTI89 / UPEC</strain>
    </source>
</reference>
<comment type="function">
    <text evidence="1">Transfers the gamma-phosphate of ATP to the 4'-position of a tetraacyldisaccharide 1-phosphate intermediate (termed DS-1-P) to form tetraacyldisaccharide 1,4'-bis-phosphate (lipid IVA).</text>
</comment>
<comment type="catalytic activity">
    <reaction evidence="1">
        <text>a lipid A disaccharide + ATP = a lipid IVA + ADP + H(+)</text>
        <dbReference type="Rhea" id="RHEA:67840"/>
        <dbReference type="ChEBI" id="CHEBI:15378"/>
        <dbReference type="ChEBI" id="CHEBI:30616"/>
        <dbReference type="ChEBI" id="CHEBI:176343"/>
        <dbReference type="ChEBI" id="CHEBI:176425"/>
        <dbReference type="ChEBI" id="CHEBI:456216"/>
        <dbReference type="EC" id="2.7.1.130"/>
    </reaction>
</comment>
<comment type="pathway">
    <text evidence="1">Glycolipid biosynthesis; lipid IV(A) biosynthesis; lipid IV(A) from (3R)-3-hydroxytetradecanoyl-[acyl-carrier-protein] and UDP-N-acetyl-alpha-D-glucosamine: step 6/6.</text>
</comment>
<comment type="similarity">
    <text evidence="1">Belongs to the LpxK family.</text>
</comment>
<protein>
    <recommendedName>
        <fullName evidence="1">Tetraacyldisaccharide 4'-kinase</fullName>
        <ecNumber evidence="1">2.7.1.130</ecNumber>
    </recommendedName>
    <alternativeName>
        <fullName evidence="1">Lipid A 4'-kinase</fullName>
    </alternativeName>
</protein>
<proteinExistence type="inferred from homology"/>
<keyword id="KW-0067">ATP-binding</keyword>
<keyword id="KW-0418">Kinase</keyword>
<keyword id="KW-0441">Lipid A biosynthesis</keyword>
<keyword id="KW-0444">Lipid biosynthesis</keyword>
<keyword id="KW-0443">Lipid metabolism</keyword>
<keyword id="KW-0547">Nucleotide-binding</keyword>
<keyword id="KW-0808">Transferase</keyword>
<feature type="chain" id="PRO_0000291203" description="Tetraacyldisaccharide 4'-kinase">
    <location>
        <begin position="1"/>
        <end position="328"/>
    </location>
</feature>
<feature type="binding site" evidence="1">
    <location>
        <begin position="55"/>
        <end position="62"/>
    </location>
    <ligand>
        <name>ATP</name>
        <dbReference type="ChEBI" id="CHEBI:30616"/>
    </ligand>
</feature>
<gene>
    <name evidence="1" type="primary">lpxK</name>
    <name type="ordered locus">UTI89_C0986</name>
</gene>
<accession>Q1RDU3</accession>
<organism>
    <name type="scientific">Escherichia coli (strain UTI89 / UPEC)</name>
    <dbReference type="NCBI Taxonomy" id="364106"/>
    <lineage>
        <taxon>Bacteria</taxon>
        <taxon>Pseudomonadati</taxon>
        <taxon>Pseudomonadota</taxon>
        <taxon>Gammaproteobacteria</taxon>
        <taxon>Enterobacterales</taxon>
        <taxon>Enterobacteriaceae</taxon>
        <taxon>Escherichia</taxon>
    </lineage>
</organism>